<keyword id="KW-1003">Cell membrane</keyword>
<keyword id="KW-0472">Membrane</keyword>
<keyword id="KW-1185">Reference proteome</keyword>
<keyword id="KW-0812">Transmembrane</keyword>
<keyword id="KW-1133">Transmembrane helix</keyword>
<organism>
    <name type="scientific">Aquifex aeolicus (strain VF5)</name>
    <dbReference type="NCBI Taxonomy" id="224324"/>
    <lineage>
        <taxon>Bacteria</taxon>
        <taxon>Pseudomonadati</taxon>
        <taxon>Aquificota</taxon>
        <taxon>Aquificia</taxon>
        <taxon>Aquificales</taxon>
        <taxon>Aquificaceae</taxon>
        <taxon>Aquifex</taxon>
    </lineage>
</organism>
<gene>
    <name type="ordered locus">aq_155</name>
</gene>
<sequence>MLWFSLFILSIAIGGSFALLVAIARTPGLADLFPPKYFYHALVGHVDSALIVGLYAFLIFLWHRIFEKKENFASFLPALLGFFMIAGSSLFGLGQALWNNYVPTIIHPVFFGGVSLFFLGVFLNSLRFLPQAVKNFYIGDTLKSILSTTVINSFLMPLTYLIAYFNTPKGENVYEYFEALFWFGGHTHQFVNAGLLISLWLLLLRREVLNLWFLNLLLVVFPITYFFAQIFLNPLSSTGKSLTTWGYMVGIGIPTIVYGLITLVRAVKGLDFYRSILVLSVSLYLLGALMGYMIVGMDTRVPAHYHTVIASILVGVIALTFMYLQELGYMEKLGKFEKFIPFSTVLVCFFLSSDSSGRESLELQGKLRERITYKTQRFTYSWLSWD</sequence>
<accession>O66545</accession>
<proteinExistence type="predicted"/>
<feature type="chain" id="PRO_0000186842" description="Uncharacterized protein aq_155">
    <location>
        <begin position="1"/>
        <end position="386"/>
    </location>
</feature>
<feature type="transmembrane region" description="Helical" evidence="1">
    <location>
        <begin position="3"/>
        <end position="23"/>
    </location>
</feature>
<feature type="transmembrane region" description="Helical" evidence="1">
    <location>
        <begin position="42"/>
        <end position="62"/>
    </location>
</feature>
<feature type="transmembrane region" description="Helical" evidence="1">
    <location>
        <begin position="72"/>
        <end position="92"/>
    </location>
</feature>
<feature type="transmembrane region" description="Helical" evidence="1">
    <location>
        <begin position="102"/>
        <end position="122"/>
    </location>
</feature>
<feature type="transmembrane region" description="Helical" evidence="1">
    <location>
        <begin position="145"/>
        <end position="165"/>
    </location>
</feature>
<feature type="transmembrane region" description="Helical" evidence="1">
    <location>
        <begin position="183"/>
        <end position="203"/>
    </location>
</feature>
<feature type="transmembrane region" description="Helical" evidence="1">
    <location>
        <begin position="212"/>
        <end position="232"/>
    </location>
</feature>
<feature type="transmembrane region" description="Helical" evidence="1">
    <location>
        <begin position="244"/>
        <end position="264"/>
    </location>
</feature>
<feature type="transmembrane region" description="Helical" evidence="1">
    <location>
        <begin position="276"/>
        <end position="296"/>
    </location>
</feature>
<feature type="transmembrane region" description="Helical" evidence="1">
    <location>
        <begin position="308"/>
        <end position="328"/>
    </location>
</feature>
<feature type="transmembrane region" description="Helical" evidence="1">
    <location>
        <begin position="333"/>
        <end position="353"/>
    </location>
</feature>
<name>Y155_AQUAE</name>
<evidence type="ECO:0000255" key="1"/>
<evidence type="ECO:0000305" key="2"/>
<protein>
    <recommendedName>
        <fullName>Uncharacterized protein aq_155</fullName>
    </recommendedName>
</protein>
<reference key="1">
    <citation type="journal article" date="1998" name="Nature">
        <title>The complete genome of the hyperthermophilic bacterium Aquifex aeolicus.</title>
        <authorList>
            <person name="Deckert G."/>
            <person name="Warren P.V."/>
            <person name="Gaasterland T."/>
            <person name="Young W.G."/>
            <person name="Lenox A.L."/>
            <person name="Graham D.E."/>
            <person name="Overbeek R."/>
            <person name="Snead M.A."/>
            <person name="Keller M."/>
            <person name="Aujay M."/>
            <person name="Huber R."/>
            <person name="Feldman R.A."/>
            <person name="Short J.M."/>
            <person name="Olsen G.J."/>
            <person name="Swanson R.V."/>
        </authorList>
    </citation>
    <scope>NUCLEOTIDE SEQUENCE [LARGE SCALE GENOMIC DNA]</scope>
    <source>
        <strain>VF5</strain>
    </source>
</reference>
<dbReference type="EMBL" id="AE000657">
    <property type="protein sequence ID" value="AAC06511.1"/>
    <property type="molecule type" value="Genomic_DNA"/>
</dbReference>
<dbReference type="PIR" id="F70314">
    <property type="entry name" value="F70314"/>
</dbReference>
<dbReference type="RefSeq" id="NP_213105.1">
    <property type="nucleotide sequence ID" value="NC_000918.1"/>
</dbReference>
<dbReference type="RefSeq" id="WP_010880043.1">
    <property type="nucleotide sequence ID" value="NC_000918.1"/>
</dbReference>
<dbReference type="SMR" id="O66545"/>
<dbReference type="STRING" id="224324.aq_155"/>
<dbReference type="EnsemblBacteria" id="AAC06511">
    <property type="protein sequence ID" value="AAC06511"/>
    <property type="gene ID" value="aq_155"/>
</dbReference>
<dbReference type="KEGG" id="aae:aq_155"/>
<dbReference type="eggNOG" id="COG0843">
    <property type="taxonomic scope" value="Bacteria"/>
</dbReference>
<dbReference type="HOGENOM" id="CLU_044559_0_0_0"/>
<dbReference type="InParanoid" id="O66545"/>
<dbReference type="OrthoDB" id="11275at2"/>
<dbReference type="Proteomes" id="UP000000798">
    <property type="component" value="Chromosome"/>
</dbReference>
<dbReference type="GO" id="GO:0005886">
    <property type="term" value="C:plasma membrane"/>
    <property type="evidence" value="ECO:0007669"/>
    <property type="project" value="UniProtKB-SubCell"/>
</dbReference>
<dbReference type="Gene3D" id="1.20.210.10">
    <property type="entry name" value="Cytochrome c oxidase-like, subunit I domain"/>
    <property type="match status" value="1"/>
</dbReference>
<dbReference type="InterPro" id="IPR036927">
    <property type="entry name" value="Cyt_c_oxase-like_su1_sf"/>
</dbReference>
<dbReference type="SUPFAM" id="SSF81442">
    <property type="entry name" value="Cytochrome c oxidase subunit I-like"/>
    <property type="match status" value="1"/>
</dbReference>
<comment type="subcellular location">
    <subcellularLocation>
        <location evidence="2">Cell membrane</location>
        <topology evidence="2">Multi-pass membrane protein</topology>
    </subcellularLocation>
</comment>
<comment type="similarity">
    <text evidence="2">To R.prowazekii RP382.</text>
</comment>